<sequence length="469" mass="51389">MSAVNTPAGFTDYKVADISLAAWGRRETIIAESEMPALMGLRRKYLAEQPLKGAKILGCIHMTIQTAVLIETLVALGAEVRWSSCNIFSTQDQAAASIAAAGIPVFAWKGETEEEYEWCLEQTILKDGKPWDANMILDDGGDLTQLLHDKYPQVLDRVHGVTEETTTGVHRLLDMLAKGELKVPAINVNDSVTKSKNDNKYGCRHSLNDAIKRGTDHLLSGKQALVIGYGDVGKGSAQSLRQEGMIVKVSEVDPICAMQACMDGFELVSPFIDGINHGTEASIDKALLGKIDLIVTTTGNVNVCDANMLKALKKRAVVCNIGHFDNEIDTAFMRKNWAWEEVKPQVHKIHRTGPGDFDAQNDDYLILLAEGRLVNLGNATGHPSRIMDGSFANQVLAQIFLFGQKYADLSPAQKAERLTVEVLPKKLDEEVALEMVRGFGGVVTQLTKQQAEYIGVTVEGPFKPDAYRY</sequence>
<name>SAHH_PSEF5</name>
<comment type="function">
    <text evidence="1">May play a key role in the regulation of the intracellular concentration of adenosylhomocysteine.</text>
</comment>
<comment type="catalytic activity">
    <reaction evidence="1">
        <text>S-adenosyl-L-homocysteine + H2O = L-homocysteine + adenosine</text>
        <dbReference type="Rhea" id="RHEA:21708"/>
        <dbReference type="ChEBI" id="CHEBI:15377"/>
        <dbReference type="ChEBI" id="CHEBI:16335"/>
        <dbReference type="ChEBI" id="CHEBI:57856"/>
        <dbReference type="ChEBI" id="CHEBI:58199"/>
        <dbReference type="EC" id="3.13.2.1"/>
    </reaction>
</comment>
<comment type="cofactor">
    <cofactor evidence="1">
        <name>NAD(+)</name>
        <dbReference type="ChEBI" id="CHEBI:57540"/>
    </cofactor>
    <text evidence="1">Binds 1 NAD(+) per subunit.</text>
</comment>
<comment type="pathway">
    <text evidence="1">Amino-acid biosynthesis; L-homocysteine biosynthesis; L-homocysteine from S-adenosyl-L-homocysteine: step 1/1.</text>
</comment>
<comment type="subcellular location">
    <subcellularLocation>
        <location evidence="1">Cytoplasm</location>
    </subcellularLocation>
</comment>
<comment type="similarity">
    <text evidence="1">Belongs to the adenosylhomocysteinase family.</text>
</comment>
<feature type="chain" id="PRO_1000024750" description="Adenosylhomocysteinase">
    <location>
        <begin position="1"/>
        <end position="469"/>
    </location>
</feature>
<feature type="binding site" evidence="1">
    <location>
        <position position="63"/>
    </location>
    <ligand>
        <name>substrate</name>
    </ligand>
</feature>
<feature type="binding site" evidence="1">
    <location>
        <position position="139"/>
    </location>
    <ligand>
        <name>substrate</name>
    </ligand>
</feature>
<feature type="binding site" evidence="1">
    <location>
        <position position="164"/>
    </location>
    <ligand>
        <name>substrate</name>
    </ligand>
</feature>
<feature type="binding site" evidence="1">
    <location>
        <begin position="165"/>
        <end position="167"/>
    </location>
    <ligand>
        <name>NAD(+)</name>
        <dbReference type="ChEBI" id="CHEBI:57540"/>
    </ligand>
</feature>
<feature type="binding site" evidence="1">
    <location>
        <position position="194"/>
    </location>
    <ligand>
        <name>substrate</name>
    </ligand>
</feature>
<feature type="binding site" evidence="1">
    <location>
        <position position="198"/>
    </location>
    <ligand>
        <name>substrate</name>
    </ligand>
</feature>
<feature type="binding site" evidence="1">
    <location>
        <position position="199"/>
    </location>
    <ligand>
        <name>NAD(+)</name>
        <dbReference type="ChEBI" id="CHEBI:57540"/>
    </ligand>
</feature>
<feature type="binding site" evidence="1">
    <location>
        <begin position="228"/>
        <end position="233"/>
    </location>
    <ligand>
        <name>NAD(+)</name>
        <dbReference type="ChEBI" id="CHEBI:57540"/>
    </ligand>
</feature>
<feature type="binding site" evidence="1">
    <location>
        <position position="251"/>
    </location>
    <ligand>
        <name>NAD(+)</name>
        <dbReference type="ChEBI" id="CHEBI:57540"/>
    </ligand>
</feature>
<feature type="binding site" evidence="1">
    <location>
        <position position="300"/>
    </location>
    <ligand>
        <name>NAD(+)</name>
        <dbReference type="ChEBI" id="CHEBI:57540"/>
    </ligand>
</feature>
<feature type="binding site" evidence="1">
    <location>
        <begin position="321"/>
        <end position="323"/>
    </location>
    <ligand>
        <name>NAD(+)</name>
        <dbReference type="ChEBI" id="CHEBI:57540"/>
    </ligand>
</feature>
<feature type="binding site" evidence="1">
    <location>
        <position position="375"/>
    </location>
    <ligand>
        <name>NAD(+)</name>
        <dbReference type="ChEBI" id="CHEBI:57540"/>
    </ligand>
</feature>
<keyword id="KW-0963">Cytoplasm</keyword>
<keyword id="KW-0378">Hydrolase</keyword>
<keyword id="KW-0520">NAD</keyword>
<keyword id="KW-0554">One-carbon metabolism</keyword>
<protein>
    <recommendedName>
        <fullName evidence="1">Adenosylhomocysteinase</fullName>
        <ecNumber evidence="1">3.13.2.1</ecNumber>
    </recommendedName>
    <alternativeName>
        <fullName evidence="1">S-adenosyl-L-homocysteine hydrolase</fullName>
        <shortName evidence="1">AdoHcyase</shortName>
    </alternativeName>
</protein>
<proteinExistence type="inferred from homology"/>
<accession>Q4K4H7</accession>
<dbReference type="EC" id="3.13.2.1" evidence="1"/>
<dbReference type="EMBL" id="CP000076">
    <property type="protein sequence ID" value="AAY94988.1"/>
    <property type="molecule type" value="Genomic_DNA"/>
</dbReference>
<dbReference type="RefSeq" id="WP_011063972.1">
    <property type="nucleotide sequence ID" value="NC_004129.6"/>
</dbReference>
<dbReference type="SMR" id="Q4K4H7"/>
<dbReference type="STRING" id="220664.PFL_5798"/>
<dbReference type="GeneID" id="57478753"/>
<dbReference type="KEGG" id="pfl:PFL_5798"/>
<dbReference type="PATRIC" id="fig|220664.5.peg.5912"/>
<dbReference type="eggNOG" id="COG0499">
    <property type="taxonomic scope" value="Bacteria"/>
</dbReference>
<dbReference type="HOGENOM" id="CLU_025194_2_1_6"/>
<dbReference type="UniPathway" id="UPA00314">
    <property type="reaction ID" value="UER00076"/>
</dbReference>
<dbReference type="Proteomes" id="UP000008540">
    <property type="component" value="Chromosome"/>
</dbReference>
<dbReference type="GO" id="GO:0005829">
    <property type="term" value="C:cytosol"/>
    <property type="evidence" value="ECO:0007669"/>
    <property type="project" value="TreeGrafter"/>
</dbReference>
<dbReference type="GO" id="GO:0004013">
    <property type="term" value="F:adenosylhomocysteinase activity"/>
    <property type="evidence" value="ECO:0007669"/>
    <property type="project" value="UniProtKB-UniRule"/>
</dbReference>
<dbReference type="GO" id="GO:0071269">
    <property type="term" value="P:L-homocysteine biosynthetic process"/>
    <property type="evidence" value="ECO:0007669"/>
    <property type="project" value="UniProtKB-UniRule"/>
</dbReference>
<dbReference type="GO" id="GO:0006730">
    <property type="term" value="P:one-carbon metabolic process"/>
    <property type="evidence" value="ECO:0007669"/>
    <property type="project" value="UniProtKB-KW"/>
</dbReference>
<dbReference type="GO" id="GO:0033353">
    <property type="term" value="P:S-adenosylmethionine cycle"/>
    <property type="evidence" value="ECO:0007669"/>
    <property type="project" value="TreeGrafter"/>
</dbReference>
<dbReference type="CDD" id="cd00401">
    <property type="entry name" value="SAHH"/>
    <property type="match status" value="1"/>
</dbReference>
<dbReference type="FunFam" id="3.40.50.1480:FF:000006">
    <property type="entry name" value="Adenosylhomocysteinase"/>
    <property type="match status" value="1"/>
</dbReference>
<dbReference type="FunFam" id="3.40.50.1480:FF:000007">
    <property type="entry name" value="Adenosylhomocysteinase"/>
    <property type="match status" value="1"/>
</dbReference>
<dbReference type="FunFam" id="3.40.50.720:FF:000155">
    <property type="entry name" value="Adenosylhomocysteinase"/>
    <property type="match status" value="1"/>
</dbReference>
<dbReference type="Gene3D" id="3.40.50.1480">
    <property type="entry name" value="Adenosylhomocysteinase-like"/>
    <property type="match status" value="3"/>
</dbReference>
<dbReference type="Gene3D" id="3.40.50.720">
    <property type="entry name" value="NAD(P)-binding Rossmann-like Domain"/>
    <property type="match status" value="1"/>
</dbReference>
<dbReference type="HAMAP" id="MF_00563">
    <property type="entry name" value="AdoHcyase"/>
    <property type="match status" value="1"/>
</dbReference>
<dbReference type="InterPro" id="IPR042172">
    <property type="entry name" value="Adenosylhomocyst_ase-like_sf"/>
</dbReference>
<dbReference type="InterPro" id="IPR000043">
    <property type="entry name" value="Adenosylhomocysteinase-like"/>
</dbReference>
<dbReference type="InterPro" id="IPR015878">
    <property type="entry name" value="Ado_hCys_hydrolase_NAD-bd"/>
</dbReference>
<dbReference type="InterPro" id="IPR036291">
    <property type="entry name" value="NAD(P)-bd_dom_sf"/>
</dbReference>
<dbReference type="InterPro" id="IPR020082">
    <property type="entry name" value="S-Ado-L-homoCys_hydrolase_CS"/>
</dbReference>
<dbReference type="NCBIfam" id="TIGR00936">
    <property type="entry name" value="ahcY"/>
    <property type="match status" value="1"/>
</dbReference>
<dbReference type="NCBIfam" id="NF004005">
    <property type="entry name" value="PRK05476.2-3"/>
    <property type="match status" value="1"/>
</dbReference>
<dbReference type="PANTHER" id="PTHR23420">
    <property type="entry name" value="ADENOSYLHOMOCYSTEINASE"/>
    <property type="match status" value="1"/>
</dbReference>
<dbReference type="PANTHER" id="PTHR23420:SF0">
    <property type="entry name" value="ADENOSYLHOMOCYSTEINASE"/>
    <property type="match status" value="1"/>
</dbReference>
<dbReference type="Pfam" id="PF05221">
    <property type="entry name" value="AdoHcyase"/>
    <property type="match status" value="1"/>
</dbReference>
<dbReference type="Pfam" id="PF00670">
    <property type="entry name" value="AdoHcyase_NAD"/>
    <property type="match status" value="1"/>
</dbReference>
<dbReference type="PIRSF" id="PIRSF001109">
    <property type="entry name" value="Ad_hcy_hydrolase"/>
    <property type="match status" value="1"/>
</dbReference>
<dbReference type="SMART" id="SM00996">
    <property type="entry name" value="AdoHcyase"/>
    <property type="match status" value="1"/>
</dbReference>
<dbReference type="SMART" id="SM00997">
    <property type="entry name" value="AdoHcyase_NAD"/>
    <property type="match status" value="1"/>
</dbReference>
<dbReference type="SUPFAM" id="SSF52283">
    <property type="entry name" value="Formate/glycerate dehydrogenase catalytic domain-like"/>
    <property type="match status" value="1"/>
</dbReference>
<dbReference type="SUPFAM" id="SSF51735">
    <property type="entry name" value="NAD(P)-binding Rossmann-fold domains"/>
    <property type="match status" value="1"/>
</dbReference>
<dbReference type="PROSITE" id="PS00738">
    <property type="entry name" value="ADOHCYASE_1"/>
    <property type="match status" value="1"/>
</dbReference>
<dbReference type="PROSITE" id="PS00739">
    <property type="entry name" value="ADOHCYASE_2"/>
    <property type="match status" value="1"/>
</dbReference>
<organism>
    <name type="scientific">Pseudomonas fluorescens (strain ATCC BAA-477 / NRRL B-23932 / Pf-5)</name>
    <dbReference type="NCBI Taxonomy" id="220664"/>
    <lineage>
        <taxon>Bacteria</taxon>
        <taxon>Pseudomonadati</taxon>
        <taxon>Pseudomonadota</taxon>
        <taxon>Gammaproteobacteria</taxon>
        <taxon>Pseudomonadales</taxon>
        <taxon>Pseudomonadaceae</taxon>
        <taxon>Pseudomonas</taxon>
    </lineage>
</organism>
<evidence type="ECO:0000255" key="1">
    <source>
        <dbReference type="HAMAP-Rule" id="MF_00563"/>
    </source>
</evidence>
<gene>
    <name evidence="1" type="primary">ahcY</name>
    <name type="ordered locus">PFL_5798</name>
</gene>
<reference key="1">
    <citation type="journal article" date="2005" name="Nat. Biotechnol.">
        <title>Complete genome sequence of the plant commensal Pseudomonas fluorescens Pf-5.</title>
        <authorList>
            <person name="Paulsen I.T."/>
            <person name="Press C.M."/>
            <person name="Ravel J."/>
            <person name="Kobayashi D.Y."/>
            <person name="Myers G.S.A."/>
            <person name="Mavrodi D.V."/>
            <person name="DeBoy R.T."/>
            <person name="Seshadri R."/>
            <person name="Ren Q."/>
            <person name="Madupu R."/>
            <person name="Dodson R.J."/>
            <person name="Durkin A.S."/>
            <person name="Brinkac L.M."/>
            <person name="Daugherty S.C."/>
            <person name="Sullivan S.A."/>
            <person name="Rosovitz M.J."/>
            <person name="Gwinn M.L."/>
            <person name="Zhou L."/>
            <person name="Schneider D.J."/>
            <person name="Cartinhour S.W."/>
            <person name="Nelson W.C."/>
            <person name="Weidman J."/>
            <person name="Watkins K."/>
            <person name="Tran K."/>
            <person name="Khouri H."/>
            <person name="Pierson E.A."/>
            <person name="Pierson L.S. III"/>
            <person name="Thomashow L.S."/>
            <person name="Loper J.E."/>
        </authorList>
    </citation>
    <scope>NUCLEOTIDE SEQUENCE [LARGE SCALE GENOMIC DNA]</scope>
    <source>
        <strain>ATCC BAA-477 / NRRL B-23932 / Pf-5</strain>
    </source>
</reference>